<feature type="chain" id="PRO_0000257002" description="Chaperonin GroEL 1">
    <location>
        <begin position="1"/>
        <end position="559"/>
    </location>
</feature>
<feature type="region of interest" description="Disordered" evidence="2">
    <location>
        <begin position="521"/>
        <end position="541"/>
    </location>
</feature>
<feature type="binding site" evidence="1">
    <location>
        <begin position="29"/>
        <end position="32"/>
    </location>
    <ligand>
        <name>ATP</name>
        <dbReference type="ChEBI" id="CHEBI:30616"/>
    </ligand>
</feature>
<feature type="binding site" evidence="1">
    <location>
        <begin position="86"/>
        <end position="90"/>
    </location>
    <ligand>
        <name>ATP</name>
        <dbReference type="ChEBI" id="CHEBI:30616"/>
    </ligand>
</feature>
<feature type="binding site" evidence="1">
    <location>
        <position position="413"/>
    </location>
    <ligand>
        <name>ATP</name>
        <dbReference type="ChEBI" id="CHEBI:30616"/>
    </ligand>
</feature>
<feature type="binding site" evidence="1">
    <location>
        <begin position="476"/>
        <end position="478"/>
    </location>
    <ligand>
        <name>ATP</name>
        <dbReference type="ChEBI" id="CHEBI:30616"/>
    </ligand>
</feature>
<feature type="binding site" evidence="1">
    <location>
        <position position="492"/>
    </location>
    <ligand>
        <name>ATP</name>
        <dbReference type="ChEBI" id="CHEBI:30616"/>
    </ligand>
</feature>
<keyword id="KW-0067">ATP-binding</keyword>
<keyword id="KW-0143">Chaperone</keyword>
<keyword id="KW-0963">Cytoplasm</keyword>
<keyword id="KW-0413">Isomerase</keyword>
<keyword id="KW-0547">Nucleotide-binding</keyword>
<protein>
    <recommendedName>
        <fullName evidence="1">Chaperonin GroEL 1</fullName>
        <ecNumber evidence="1">5.6.1.7</ecNumber>
    </recommendedName>
    <alternativeName>
        <fullName evidence="1">60 kDa chaperonin 1</fullName>
    </alternativeName>
    <alternativeName>
        <fullName evidence="1">Chaperonin-60 1</fullName>
        <shortName evidence="1">Cpn60 1</shortName>
    </alternativeName>
</protein>
<reference key="1">
    <citation type="submission" date="2005-07" db="EMBL/GenBank/DDBJ databases">
        <title>Complete sequence of Synechococcus sp. CC9605.</title>
        <authorList>
            <consortium name="US DOE Joint Genome Institute"/>
            <person name="Copeland A."/>
            <person name="Lucas S."/>
            <person name="Lapidus A."/>
            <person name="Barry K."/>
            <person name="Detter J.C."/>
            <person name="Glavina T."/>
            <person name="Hammon N."/>
            <person name="Israni S."/>
            <person name="Pitluck S."/>
            <person name="Schmutz J."/>
            <person name="Martinez M."/>
            <person name="Larimer F."/>
            <person name="Land M."/>
            <person name="Kyrpides N."/>
            <person name="Ivanova N."/>
            <person name="Richardson P."/>
        </authorList>
    </citation>
    <scope>NUCLEOTIDE SEQUENCE [LARGE SCALE GENOMIC DNA]</scope>
    <source>
        <strain>CC9605</strain>
    </source>
</reference>
<comment type="function">
    <text evidence="1">Together with its co-chaperonin GroES, plays an essential role in assisting protein folding. The GroEL-GroES system forms a nano-cage that allows encapsulation of the non-native substrate proteins and provides a physical environment optimized to promote and accelerate protein folding.</text>
</comment>
<comment type="catalytic activity">
    <reaction evidence="1">
        <text>ATP + H2O + a folded polypeptide = ADP + phosphate + an unfolded polypeptide.</text>
        <dbReference type="EC" id="5.6.1.7"/>
    </reaction>
</comment>
<comment type="subunit">
    <text evidence="1">Forms a cylinder of 14 subunits composed of two heptameric rings stacked back-to-back. Interacts with the co-chaperonin GroES.</text>
</comment>
<comment type="subcellular location">
    <subcellularLocation>
        <location evidence="1">Cytoplasm</location>
    </subcellularLocation>
</comment>
<comment type="similarity">
    <text evidence="1">Belongs to the chaperonin (HSP60) family.</text>
</comment>
<evidence type="ECO:0000255" key="1">
    <source>
        <dbReference type="HAMAP-Rule" id="MF_00600"/>
    </source>
</evidence>
<evidence type="ECO:0000256" key="2">
    <source>
        <dbReference type="SAM" id="MobiDB-lite"/>
    </source>
</evidence>
<gene>
    <name evidence="1" type="primary">groEL1</name>
    <name evidence="1" type="synonym">groL1</name>
    <name type="ordered locus">Syncc9605_0615</name>
</gene>
<name>CH601_SYNSC</name>
<organism>
    <name type="scientific">Synechococcus sp. (strain CC9605)</name>
    <dbReference type="NCBI Taxonomy" id="110662"/>
    <lineage>
        <taxon>Bacteria</taxon>
        <taxon>Bacillati</taxon>
        <taxon>Cyanobacteriota</taxon>
        <taxon>Cyanophyceae</taxon>
        <taxon>Synechococcales</taxon>
        <taxon>Synechococcaceae</taxon>
        <taxon>Synechococcus</taxon>
    </lineage>
</organism>
<sequence>MAKLLSFSDESRSALERGVDALADAVRVTIGPRGRNVVLEKKFGAPDIVNDGDSIAREIELDDPFENLGAKLMQQVASKTKDKAGDGTTTATVLAQAMVREGLRNTAAGASPVELRRGMEKAAAHIVAGLSERSQAIAGDAIRQVATVSSGGDEEVGRMIAEAMDKVSTDGVITVEESKSLATELEITEGMAFDRGYSSPYFVTDADRQVCEFDNPLILLTDRKISTITDLVPVLETVQKSGSPLLILSEEVEGEALATLVMNKSRGVLQVAAVRAPSFGERRKAALADIAILTGGTLISEDKAMTLDKVTLEDLGKARRVTISKENTTIVANDDHRQAVSERVSAIRRELEATESDYDREKLQERIAKLAGGVAVIKVGAPTETELKNRKLRIEDALNATRAAVEEGIVAGGGSTLLQLADSLDALASSLNGDQRTGVEIVQRALTAPIHQIATNAGQNGDVVIAGMRSSGQGFNALSGVYEDLMAAGIVDAAKVVRLAVQDSISIASLLITTEVVIADKPEPPAPAPAGDGDPMGGMGGMGGMGMPGMGGMGMPGMM</sequence>
<proteinExistence type="inferred from homology"/>
<dbReference type="EC" id="5.6.1.7" evidence="1"/>
<dbReference type="EMBL" id="CP000110">
    <property type="protein sequence ID" value="ABB34389.1"/>
    <property type="molecule type" value="Genomic_DNA"/>
</dbReference>
<dbReference type="RefSeq" id="WP_011363619.1">
    <property type="nucleotide sequence ID" value="NC_007516.1"/>
</dbReference>
<dbReference type="SMR" id="Q3ALZ3"/>
<dbReference type="STRING" id="110662.Syncc9605_0615"/>
<dbReference type="KEGG" id="syd:Syncc9605_0615"/>
<dbReference type="eggNOG" id="COG0459">
    <property type="taxonomic scope" value="Bacteria"/>
</dbReference>
<dbReference type="HOGENOM" id="CLU_016503_3_0_3"/>
<dbReference type="OrthoDB" id="9766614at2"/>
<dbReference type="GO" id="GO:0005737">
    <property type="term" value="C:cytoplasm"/>
    <property type="evidence" value="ECO:0007669"/>
    <property type="project" value="UniProtKB-SubCell"/>
</dbReference>
<dbReference type="GO" id="GO:0005524">
    <property type="term" value="F:ATP binding"/>
    <property type="evidence" value="ECO:0007669"/>
    <property type="project" value="UniProtKB-UniRule"/>
</dbReference>
<dbReference type="GO" id="GO:0140662">
    <property type="term" value="F:ATP-dependent protein folding chaperone"/>
    <property type="evidence" value="ECO:0007669"/>
    <property type="project" value="InterPro"/>
</dbReference>
<dbReference type="GO" id="GO:0016853">
    <property type="term" value="F:isomerase activity"/>
    <property type="evidence" value="ECO:0007669"/>
    <property type="project" value="UniProtKB-KW"/>
</dbReference>
<dbReference type="GO" id="GO:0051082">
    <property type="term" value="F:unfolded protein binding"/>
    <property type="evidence" value="ECO:0007669"/>
    <property type="project" value="UniProtKB-UniRule"/>
</dbReference>
<dbReference type="GO" id="GO:0042026">
    <property type="term" value="P:protein refolding"/>
    <property type="evidence" value="ECO:0007669"/>
    <property type="project" value="UniProtKB-UniRule"/>
</dbReference>
<dbReference type="CDD" id="cd03344">
    <property type="entry name" value="GroEL"/>
    <property type="match status" value="1"/>
</dbReference>
<dbReference type="FunFam" id="3.50.7.10:FF:000001">
    <property type="entry name" value="60 kDa chaperonin"/>
    <property type="match status" value="1"/>
</dbReference>
<dbReference type="Gene3D" id="3.50.7.10">
    <property type="entry name" value="GroEL"/>
    <property type="match status" value="1"/>
</dbReference>
<dbReference type="Gene3D" id="1.10.560.10">
    <property type="entry name" value="GroEL-like equatorial domain"/>
    <property type="match status" value="1"/>
</dbReference>
<dbReference type="Gene3D" id="3.30.260.10">
    <property type="entry name" value="TCP-1-like chaperonin intermediate domain"/>
    <property type="match status" value="1"/>
</dbReference>
<dbReference type="HAMAP" id="MF_00600">
    <property type="entry name" value="CH60"/>
    <property type="match status" value="1"/>
</dbReference>
<dbReference type="InterPro" id="IPR018370">
    <property type="entry name" value="Chaperonin_Cpn60_CS"/>
</dbReference>
<dbReference type="InterPro" id="IPR001844">
    <property type="entry name" value="Cpn60/GroEL"/>
</dbReference>
<dbReference type="InterPro" id="IPR002423">
    <property type="entry name" value="Cpn60/GroEL/TCP-1"/>
</dbReference>
<dbReference type="InterPro" id="IPR027409">
    <property type="entry name" value="GroEL-like_apical_dom_sf"/>
</dbReference>
<dbReference type="InterPro" id="IPR027413">
    <property type="entry name" value="GROEL-like_equatorial_sf"/>
</dbReference>
<dbReference type="InterPro" id="IPR027410">
    <property type="entry name" value="TCP-1-like_intermed_sf"/>
</dbReference>
<dbReference type="NCBIfam" id="TIGR02348">
    <property type="entry name" value="GroEL"/>
    <property type="match status" value="1"/>
</dbReference>
<dbReference type="NCBIfam" id="NF000592">
    <property type="entry name" value="PRK00013.1"/>
    <property type="match status" value="1"/>
</dbReference>
<dbReference type="NCBIfam" id="NF009487">
    <property type="entry name" value="PRK12849.1"/>
    <property type="match status" value="1"/>
</dbReference>
<dbReference type="NCBIfam" id="NF009488">
    <property type="entry name" value="PRK12850.1"/>
    <property type="match status" value="1"/>
</dbReference>
<dbReference type="NCBIfam" id="NF009489">
    <property type="entry name" value="PRK12851.1"/>
    <property type="match status" value="1"/>
</dbReference>
<dbReference type="PANTHER" id="PTHR45633">
    <property type="entry name" value="60 KDA HEAT SHOCK PROTEIN, MITOCHONDRIAL"/>
    <property type="match status" value="1"/>
</dbReference>
<dbReference type="Pfam" id="PF00118">
    <property type="entry name" value="Cpn60_TCP1"/>
    <property type="match status" value="1"/>
</dbReference>
<dbReference type="PRINTS" id="PR00298">
    <property type="entry name" value="CHAPERONIN60"/>
</dbReference>
<dbReference type="SUPFAM" id="SSF52029">
    <property type="entry name" value="GroEL apical domain-like"/>
    <property type="match status" value="1"/>
</dbReference>
<dbReference type="SUPFAM" id="SSF48592">
    <property type="entry name" value="GroEL equatorial domain-like"/>
    <property type="match status" value="1"/>
</dbReference>
<dbReference type="SUPFAM" id="SSF54849">
    <property type="entry name" value="GroEL-intermediate domain like"/>
    <property type="match status" value="1"/>
</dbReference>
<dbReference type="PROSITE" id="PS00296">
    <property type="entry name" value="CHAPERONINS_CPN60"/>
    <property type="match status" value="1"/>
</dbReference>
<accession>Q3ALZ3</accession>